<dbReference type="EC" id="1.1.1.25" evidence="1"/>
<dbReference type="EMBL" id="CP001359">
    <property type="protein sequence ID" value="ACL63566.1"/>
    <property type="molecule type" value="Genomic_DNA"/>
</dbReference>
<dbReference type="RefSeq" id="WP_012631631.1">
    <property type="nucleotide sequence ID" value="NC_011891.1"/>
</dbReference>
<dbReference type="SMR" id="B8J8W8"/>
<dbReference type="KEGG" id="acp:A2cp1_0207"/>
<dbReference type="HOGENOM" id="CLU_044063_4_1_7"/>
<dbReference type="UniPathway" id="UPA00053">
    <property type="reaction ID" value="UER00087"/>
</dbReference>
<dbReference type="Proteomes" id="UP000007089">
    <property type="component" value="Chromosome"/>
</dbReference>
<dbReference type="GO" id="GO:0004764">
    <property type="term" value="F:shikimate 3-dehydrogenase (NADP+) activity"/>
    <property type="evidence" value="ECO:0007669"/>
    <property type="project" value="UniProtKB-UniRule"/>
</dbReference>
<dbReference type="GO" id="GO:0008652">
    <property type="term" value="P:amino acid biosynthetic process"/>
    <property type="evidence" value="ECO:0007669"/>
    <property type="project" value="UniProtKB-KW"/>
</dbReference>
<dbReference type="GO" id="GO:0009073">
    <property type="term" value="P:aromatic amino acid family biosynthetic process"/>
    <property type="evidence" value="ECO:0007669"/>
    <property type="project" value="UniProtKB-KW"/>
</dbReference>
<dbReference type="GO" id="GO:0009423">
    <property type="term" value="P:chorismate biosynthetic process"/>
    <property type="evidence" value="ECO:0007669"/>
    <property type="project" value="UniProtKB-UniRule"/>
</dbReference>
<dbReference type="GO" id="GO:0019632">
    <property type="term" value="P:shikimate metabolic process"/>
    <property type="evidence" value="ECO:0007669"/>
    <property type="project" value="TreeGrafter"/>
</dbReference>
<dbReference type="Gene3D" id="3.40.50.10860">
    <property type="entry name" value="Leucine Dehydrogenase, chain A, domain 1"/>
    <property type="match status" value="1"/>
</dbReference>
<dbReference type="Gene3D" id="3.40.50.720">
    <property type="entry name" value="NAD(P)-binding Rossmann-like Domain"/>
    <property type="match status" value="1"/>
</dbReference>
<dbReference type="HAMAP" id="MF_00222">
    <property type="entry name" value="Shikimate_DH_AroE"/>
    <property type="match status" value="1"/>
</dbReference>
<dbReference type="InterPro" id="IPR046346">
    <property type="entry name" value="Aminoacid_DH-like_N_sf"/>
</dbReference>
<dbReference type="InterPro" id="IPR036291">
    <property type="entry name" value="NAD(P)-bd_dom_sf"/>
</dbReference>
<dbReference type="InterPro" id="IPR041121">
    <property type="entry name" value="SDH_C"/>
</dbReference>
<dbReference type="InterPro" id="IPR013708">
    <property type="entry name" value="Shikimate_DH-bd_N"/>
</dbReference>
<dbReference type="InterPro" id="IPR022893">
    <property type="entry name" value="Shikimate_DH_fam"/>
</dbReference>
<dbReference type="InterPro" id="IPR006151">
    <property type="entry name" value="Shikm_DH/Glu-tRNA_Rdtase"/>
</dbReference>
<dbReference type="PANTHER" id="PTHR21089:SF1">
    <property type="entry name" value="BIFUNCTIONAL 3-DEHYDROQUINATE DEHYDRATASE_SHIKIMATE DEHYDROGENASE, CHLOROPLASTIC"/>
    <property type="match status" value="1"/>
</dbReference>
<dbReference type="PANTHER" id="PTHR21089">
    <property type="entry name" value="SHIKIMATE DEHYDROGENASE"/>
    <property type="match status" value="1"/>
</dbReference>
<dbReference type="Pfam" id="PF18317">
    <property type="entry name" value="SDH_C"/>
    <property type="match status" value="1"/>
</dbReference>
<dbReference type="Pfam" id="PF01488">
    <property type="entry name" value="Shikimate_DH"/>
    <property type="match status" value="1"/>
</dbReference>
<dbReference type="Pfam" id="PF08501">
    <property type="entry name" value="Shikimate_dh_N"/>
    <property type="match status" value="1"/>
</dbReference>
<dbReference type="SUPFAM" id="SSF53223">
    <property type="entry name" value="Aminoacid dehydrogenase-like, N-terminal domain"/>
    <property type="match status" value="1"/>
</dbReference>
<dbReference type="SUPFAM" id="SSF51735">
    <property type="entry name" value="NAD(P)-binding Rossmann-fold domains"/>
    <property type="match status" value="1"/>
</dbReference>
<comment type="function">
    <text evidence="1">Involved in the biosynthesis of the chorismate, which leads to the biosynthesis of aromatic amino acids. Catalyzes the reversible NADPH linked reduction of 3-dehydroshikimate (DHSA) to yield shikimate (SA).</text>
</comment>
<comment type="catalytic activity">
    <reaction evidence="1">
        <text>shikimate + NADP(+) = 3-dehydroshikimate + NADPH + H(+)</text>
        <dbReference type="Rhea" id="RHEA:17737"/>
        <dbReference type="ChEBI" id="CHEBI:15378"/>
        <dbReference type="ChEBI" id="CHEBI:16630"/>
        <dbReference type="ChEBI" id="CHEBI:36208"/>
        <dbReference type="ChEBI" id="CHEBI:57783"/>
        <dbReference type="ChEBI" id="CHEBI:58349"/>
        <dbReference type="EC" id="1.1.1.25"/>
    </reaction>
</comment>
<comment type="pathway">
    <text evidence="1">Metabolic intermediate biosynthesis; chorismate biosynthesis; chorismate from D-erythrose 4-phosphate and phosphoenolpyruvate: step 4/7.</text>
</comment>
<comment type="subunit">
    <text evidence="1">Homodimer.</text>
</comment>
<comment type="similarity">
    <text evidence="1">Belongs to the shikimate dehydrogenase family.</text>
</comment>
<proteinExistence type="inferred from homology"/>
<feature type="chain" id="PRO_1000124869" description="Shikimate dehydrogenase (NADP(+))">
    <location>
        <begin position="1"/>
        <end position="278"/>
    </location>
</feature>
<feature type="active site" description="Proton acceptor" evidence="1">
    <location>
        <position position="70"/>
    </location>
</feature>
<feature type="binding site" evidence="1">
    <location>
        <begin position="19"/>
        <end position="21"/>
    </location>
    <ligand>
        <name>shikimate</name>
        <dbReference type="ChEBI" id="CHEBI:36208"/>
    </ligand>
</feature>
<feature type="binding site" evidence="1">
    <location>
        <position position="66"/>
    </location>
    <ligand>
        <name>shikimate</name>
        <dbReference type="ChEBI" id="CHEBI:36208"/>
    </ligand>
</feature>
<feature type="binding site" evidence="1">
    <location>
        <position position="91"/>
    </location>
    <ligand>
        <name>shikimate</name>
        <dbReference type="ChEBI" id="CHEBI:36208"/>
    </ligand>
</feature>
<feature type="binding site" evidence="1">
    <location>
        <position position="106"/>
    </location>
    <ligand>
        <name>shikimate</name>
        <dbReference type="ChEBI" id="CHEBI:36208"/>
    </ligand>
</feature>
<feature type="binding site" evidence="1">
    <location>
        <begin position="129"/>
        <end position="133"/>
    </location>
    <ligand>
        <name>NADP(+)</name>
        <dbReference type="ChEBI" id="CHEBI:58349"/>
    </ligand>
</feature>
<feature type="binding site" evidence="1">
    <location>
        <position position="221"/>
    </location>
    <ligand>
        <name>NADP(+)</name>
        <dbReference type="ChEBI" id="CHEBI:58349"/>
    </ligand>
</feature>
<feature type="binding site" evidence="1">
    <location>
        <position position="223"/>
    </location>
    <ligand>
        <name>shikimate</name>
        <dbReference type="ChEBI" id="CHEBI:36208"/>
    </ligand>
</feature>
<feature type="binding site" evidence="1">
    <location>
        <position position="242"/>
    </location>
    <ligand>
        <name>NADP(+)</name>
        <dbReference type="ChEBI" id="CHEBI:58349"/>
    </ligand>
</feature>
<name>AROE_ANAD2</name>
<keyword id="KW-0028">Amino-acid biosynthesis</keyword>
<keyword id="KW-0057">Aromatic amino acid biosynthesis</keyword>
<keyword id="KW-0521">NADP</keyword>
<keyword id="KW-0560">Oxidoreductase</keyword>
<protein>
    <recommendedName>
        <fullName evidence="1">Shikimate dehydrogenase (NADP(+))</fullName>
        <shortName evidence="1">SDH</shortName>
        <ecNumber evidence="1">1.1.1.25</ecNumber>
    </recommendedName>
</protein>
<accession>B8J8W8</accession>
<reference key="1">
    <citation type="submission" date="2009-01" db="EMBL/GenBank/DDBJ databases">
        <title>Complete sequence of Anaeromyxobacter dehalogenans 2CP-1.</title>
        <authorList>
            <person name="Lucas S."/>
            <person name="Copeland A."/>
            <person name="Lapidus A."/>
            <person name="Glavina del Rio T."/>
            <person name="Dalin E."/>
            <person name="Tice H."/>
            <person name="Bruce D."/>
            <person name="Goodwin L."/>
            <person name="Pitluck S."/>
            <person name="Saunders E."/>
            <person name="Brettin T."/>
            <person name="Detter J.C."/>
            <person name="Han C."/>
            <person name="Larimer F."/>
            <person name="Land M."/>
            <person name="Hauser L."/>
            <person name="Kyrpides N."/>
            <person name="Ovchinnikova G."/>
            <person name="Beliaev A.S."/>
            <person name="Richardson P."/>
        </authorList>
    </citation>
    <scope>NUCLEOTIDE SEQUENCE [LARGE SCALE GENOMIC DNA]</scope>
    <source>
        <strain>2CP-1 / ATCC BAA-258</strain>
    </source>
</reference>
<sequence length="278" mass="28740">MITGRTALYGVVGHPVAHSRSPEMQNAAFARLGVDAVYVALPVAPERIDEALRGAHALGFQGLNVTVPHKPRAASLCHALDPVATAVGAANTLRRTRDGWDGFNTDAPACRTLLEAAGVVRGSRALLVGAGGAARAAAWALVQLGTEVRVAARREEAAAELCRDLAAAVPGADLAAADFEDLEAEADAAAVVVNGTSVGLPGHEGRLPPLRFRAAQVVLDFVYGDTELARAARAAGARLVSGEQVLVRQGALAFTIWTGQPAPEADMARALEAREGAR</sequence>
<evidence type="ECO:0000255" key="1">
    <source>
        <dbReference type="HAMAP-Rule" id="MF_00222"/>
    </source>
</evidence>
<organism>
    <name type="scientific">Anaeromyxobacter dehalogenans (strain 2CP-1 / ATCC BAA-258)</name>
    <dbReference type="NCBI Taxonomy" id="455488"/>
    <lineage>
        <taxon>Bacteria</taxon>
        <taxon>Pseudomonadati</taxon>
        <taxon>Myxococcota</taxon>
        <taxon>Myxococcia</taxon>
        <taxon>Myxococcales</taxon>
        <taxon>Cystobacterineae</taxon>
        <taxon>Anaeromyxobacteraceae</taxon>
        <taxon>Anaeromyxobacter</taxon>
    </lineage>
</organism>
<gene>
    <name evidence="1" type="primary">aroE</name>
    <name type="ordered locus">A2cp1_0207</name>
</gene>